<dbReference type="EC" id="1.14.-.-" evidence="1"/>
<dbReference type="EMBL" id="AM884177">
    <property type="protein sequence ID" value="CAP07282.1"/>
    <property type="molecule type" value="Genomic_DNA"/>
</dbReference>
<dbReference type="RefSeq" id="WP_009873959.1">
    <property type="nucleotide sequence ID" value="NC_010280.2"/>
</dbReference>
<dbReference type="SMR" id="B0BA81"/>
<dbReference type="KEGG" id="ctl:CTLon_0885"/>
<dbReference type="HOGENOM" id="CLU_038878_1_0_0"/>
<dbReference type="Proteomes" id="UP001154401">
    <property type="component" value="Chromosome"/>
</dbReference>
<dbReference type="GO" id="GO:0016705">
    <property type="term" value="F:oxidoreductase activity, acting on paired donors, with incorporation or reduction of molecular oxygen"/>
    <property type="evidence" value="ECO:0007669"/>
    <property type="project" value="UniProtKB-UniRule"/>
</dbReference>
<dbReference type="GO" id="GO:0006400">
    <property type="term" value="P:tRNA modification"/>
    <property type="evidence" value="ECO:0007669"/>
    <property type="project" value="UniProtKB-UniRule"/>
</dbReference>
<dbReference type="CDD" id="cd01518">
    <property type="entry name" value="RHOD_YceA"/>
    <property type="match status" value="1"/>
</dbReference>
<dbReference type="Gene3D" id="3.30.70.100">
    <property type="match status" value="1"/>
</dbReference>
<dbReference type="Gene3D" id="3.40.250.10">
    <property type="entry name" value="Rhodanese-like domain"/>
    <property type="match status" value="1"/>
</dbReference>
<dbReference type="HAMAP" id="MF_00469">
    <property type="entry name" value="TrhO"/>
    <property type="match status" value="1"/>
</dbReference>
<dbReference type="InterPro" id="IPR001763">
    <property type="entry name" value="Rhodanese-like_dom"/>
</dbReference>
<dbReference type="InterPro" id="IPR036873">
    <property type="entry name" value="Rhodanese-like_dom_sf"/>
</dbReference>
<dbReference type="InterPro" id="IPR022111">
    <property type="entry name" value="Rhodanese_C"/>
</dbReference>
<dbReference type="InterPro" id="IPR020936">
    <property type="entry name" value="TrhO"/>
</dbReference>
<dbReference type="InterPro" id="IPR040503">
    <property type="entry name" value="TRHO_N"/>
</dbReference>
<dbReference type="NCBIfam" id="NF001134">
    <property type="entry name" value="PRK00142.1-2"/>
    <property type="match status" value="1"/>
</dbReference>
<dbReference type="NCBIfam" id="NF001135">
    <property type="entry name" value="PRK00142.1-3"/>
    <property type="match status" value="1"/>
</dbReference>
<dbReference type="PANTHER" id="PTHR43268:SF3">
    <property type="entry name" value="RHODANESE-LIKE DOMAIN-CONTAINING PROTEIN 7-RELATED"/>
    <property type="match status" value="1"/>
</dbReference>
<dbReference type="PANTHER" id="PTHR43268">
    <property type="entry name" value="THIOSULFATE SULFURTRANSFERASE/RHODANESE-LIKE DOMAIN-CONTAINING PROTEIN 2"/>
    <property type="match status" value="1"/>
</dbReference>
<dbReference type="Pfam" id="PF00581">
    <property type="entry name" value="Rhodanese"/>
    <property type="match status" value="1"/>
</dbReference>
<dbReference type="Pfam" id="PF12368">
    <property type="entry name" value="Rhodanese_C"/>
    <property type="match status" value="1"/>
</dbReference>
<dbReference type="Pfam" id="PF17773">
    <property type="entry name" value="UPF0176_N"/>
    <property type="match status" value="1"/>
</dbReference>
<dbReference type="SMART" id="SM00450">
    <property type="entry name" value="RHOD"/>
    <property type="match status" value="1"/>
</dbReference>
<dbReference type="SUPFAM" id="SSF52821">
    <property type="entry name" value="Rhodanese/Cell cycle control phosphatase"/>
    <property type="match status" value="1"/>
</dbReference>
<dbReference type="PROSITE" id="PS50206">
    <property type="entry name" value="RHODANESE_3"/>
    <property type="match status" value="1"/>
</dbReference>
<protein>
    <recommendedName>
        <fullName evidence="1">tRNA uridine(34) hydroxylase</fullName>
        <ecNumber evidence="1">1.14.-.-</ecNumber>
    </recommendedName>
    <alternativeName>
        <fullName evidence="1">tRNA hydroxylation protein O</fullName>
    </alternativeName>
</protein>
<keyword id="KW-0560">Oxidoreductase</keyword>
<keyword id="KW-0819">tRNA processing</keyword>
<organism>
    <name type="scientific">Chlamydia trachomatis serovar L2b (strain UCH-1/proctitis)</name>
    <dbReference type="NCBI Taxonomy" id="471473"/>
    <lineage>
        <taxon>Bacteria</taxon>
        <taxon>Pseudomonadati</taxon>
        <taxon>Chlamydiota</taxon>
        <taxon>Chlamydiia</taxon>
        <taxon>Chlamydiales</taxon>
        <taxon>Chlamydiaceae</taxon>
        <taxon>Chlamydia/Chlamydophila group</taxon>
        <taxon>Chlamydia</taxon>
    </lineage>
</organism>
<proteinExistence type="inferred from homology"/>
<name>TRHO_CHLTB</name>
<reference key="1">
    <citation type="journal article" date="2008" name="Genome Res.">
        <title>Chlamydia trachomatis: genome sequence analysis of lymphogranuloma venereum isolates.</title>
        <authorList>
            <person name="Thomson N.R."/>
            <person name="Holden M.T.G."/>
            <person name="Carder C."/>
            <person name="Lennard N."/>
            <person name="Lockey S.J."/>
            <person name="Marsh P."/>
            <person name="Skipp P."/>
            <person name="O'Connor C.D."/>
            <person name="Goodhead I."/>
            <person name="Norbertzcak H."/>
            <person name="Harris B."/>
            <person name="Ormond D."/>
            <person name="Rance R."/>
            <person name="Quail M.A."/>
            <person name="Parkhill J."/>
            <person name="Stephens R.S."/>
            <person name="Clarke I.N."/>
        </authorList>
    </citation>
    <scope>NUCLEOTIDE SEQUENCE [LARGE SCALE GENOMIC DNA]</scope>
    <source>
        <strain>UCH-1/proctitis</strain>
    </source>
</reference>
<sequence>MEKNYYALAYYYFGPVSNPYEEIALHKQLFKTMDVSCRIYISEEGINGQFSGYQPDAERYMAWLKQRPDFASIKFKIHHIEENIFPRVTVKYRKELVALGCSVDTTKQGKHISPEEWHEKLQENRCLVLDVRNNYEWKIGHFENAVLPDIETFREFPDYADRLAKEHDPAKTPVMMYCTGGIRCELYSALLLEKGFKEVYQLDGGVIAYGLKMGTGKWRGKLFVFDDRMAMPIDEADPNVSPIARCSLCNTDSDTYYNCANTDCNNLFICCESCIATHKGCCSEECSQAPRIRAFSAERGNKPFRRKHLCPTIEQSCCLKEQENQPA</sequence>
<comment type="function">
    <text evidence="1">Catalyzes oxygen-dependent 5-hydroxyuridine (ho5U) modification at position 34 in tRNAs.</text>
</comment>
<comment type="catalytic activity">
    <reaction evidence="1">
        <text>uridine(34) in tRNA + AH2 + O2 = 5-hydroxyuridine(34) in tRNA + A + H2O</text>
        <dbReference type="Rhea" id="RHEA:64224"/>
        <dbReference type="Rhea" id="RHEA-COMP:11727"/>
        <dbReference type="Rhea" id="RHEA-COMP:13381"/>
        <dbReference type="ChEBI" id="CHEBI:13193"/>
        <dbReference type="ChEBI" id="CHEBI:15377"/>
        <dbReference type="ChEBI" id="CHEBI:15379"/>
        <dbReference type="ChEBI" id="CHEBI:17499"/>
        <dbReference type="ChEBI" id="CHEBI:65315"/>
        <dbReference type="ChEBI" id="CHEBI:136877"/>
    </reaction>
</comment>
<comment type="similarity">
    <text evidence="1">Belongs to the TrhO family.</text>
</comment>
<feature type="chain" id="PRO_1000200349" description="tRNA uridine(34) hydroxylase">
    <location>
        <begin position="1"/>
        <end position="327"/>
    </location>
</feature>
<feature type="domain" description="Rhodanese" evidence="1">
    <location>
        <begin position="122"/>
        <end position="218"/>
    </location>
</feature>
<feature type="active site" description="Cysteine persulfide intermediate" evidence="1">
    <location>
        <position position="178"/>
    </location>
</feature>
<evidence type="ECO:0000255" key="1">
    <source>
        <dbReference type="HAMAP-Rule" id="MF_00469"/>
    </source>
</evidence>
<gene>
    <name evidence="1" type="primary">trhO</name>
    <name type="ordered locus">CTLon_0885</name>
</gene>
<accession>B0BA81</accession>